<proteinExistence type="evidence at protein level"/>
<sequence length="131" mass="14038">MSWQTYVDEHLMCDIEGHQLGSAAILGHAGTVWAQSTAFPQFKPEEIAAIMKDFDEPGHLAPTGMFVATAKYMVIAGEPGAVIRGKKGSGGITIKKTGQALVVGIYDEPMTPGQCNMVVERLGDYLLEQGL</sequence>
<reference key="1">
    <citation type="journal article" date="2012" name="PLoS ONE">
        <title>Characterization of profilin polymorphism in pollen with a focus on multifunctionality.</title>
        <authorList>
            <person name="Jimenez-Lopez J.C."/>
            <person name="Morales S."/>
            <person name="Castro A.J."/>
            <person name="Volkmann D."/>
            <person name="Rodriguez-Garcia M.I."/>
            <person name="Alche Jde D."/>
        </authorList>
    </citation>
    <scope>NUCLEOTIDE SEQUENCE [MRNA]</scope>
    <scope>POLYMORPHISM</scope>
    <source>
        <strain>cv. Picual</strain>
    </source>
</reference>
<reference key="2">
    <citation type="journal article" date="2013" name="PLoS ONE">
        <title>Analysis of the effects of polymorphism on pollen profilin structural functionality and the generation of conformational, T- and B-cell epitopes.</title>
        <authorList>
            <person name="Jimenez-Lopez J.C."/>
            <person name="Rodriguez-Garcia M.I."/>
            <person name="Alche J.D."/>
        </authorList>
    </citation>
    <scope>3D-STRUCTURE MODELING</scope>
    <scope>DISULFIDE BOND</scope>
</reference>
<protein>
    <recommendedName>
        <fullName>Profilin-3</fullName>
    </recommendedName>
    <alternativeName>
        <fullName>Pollen allergen Ole e 2</fullName>
    </alternativeName>
    <allergenName>Ole e 2</allergenName>
</protein>
<keyword id="KW-0009">Actin-binding</keyword>
<keyword id="KW-0020">Allergen</keyword>
<keyword id="KW-0963">Cytoplasm</keyword>
<keyword id="KW-0206">Cytoskeleton</keyword>
<keyword id="KW-1015">Disulfide bond</keyword>
<keyword id="KW-0597">Phosphoprotein</keyword>
<comment type="function">
    <text evidence="1">Binds to actin and affects the structure of the cytoskeleton. At high concentrations, profilin prevents the polymerization of actin, whereas it enhances it at low concentrations (By similarity).</text>
</comment>
<comment type="subunit">
    <text evidence="1">Occurs in many kinds of cells as a complex with monomeric actin in a 1:1 ratio.</text>
</comment>
<comment type="subcellular location">
    <subcellularLocation>
        <location evidence="1">Cytoplasm</location>
        <location evidence="1">Cytoskeleton</location>
    </subcellularLocation>
</comment>
<comment type="PTM">
    <text evidence="1">Phosphorylated by MAP kinases.</text>
</comment>
<comment type="polymorphism">
    <text>Several isoforms of the allergen exist due to polymorphism.</text>
</comment>
<comment type="allergen">
    <text>Causes an allergic reaction in human.</text>
</comment>
<comment type="miscellaneous">
    <text evidence="3">The variability of the residues taking part of IgE-binding epitopes might be responsible of the difference in cross-reactivity among olive pollen cultivars, and between distantly related pollen species, leading to a variable range of allergy reactions among atopic patients.</text>
</comment>
<comment type="similarity">
    <text evidence="2">Belongs to the profilin family.</text>
</comment>
<organism>
    <name type="scientific">Olea europaea</name>
    <name type="common">Common olive</name>
    <dbReference type="NCBI Taxonomy" id="4146"/>
    <lineage>
        <taxon>Eukaryota</taxon>
        <taxon>Viridiplantae</taxon>
        <taxon>Streptophyta</taxon>
        <taxon>Embryophyta</taxon>
        <taxon>Tracheophyta</taxon>
        <taxon>Spermatophyta</taxon>
        <taxon>Magnoliopsida</taxon>
        <taxon>eudicotyledons</taxon>
        <taxon>Gunneridae</taxon>
        <taxon>Pentapetalae</taxon>
        <taxon>asterids</taxon>
        <taxon>lamiids</taxon>
        <taxon>Lamiales</taxon>
        <taxon>Oleaceae</taxon>
        <taxon>Oleeae</taxon>
        <taxon>Olea</taxon>
    </lineage>
</organism>
<dbReference type="EMBL" id="DQ640904">
    <property type="protein sequence ID" value="ABG33900.1"/>
    <property type="molecule type" value="mRNA"/>
</dbReference>
<dbReference type="SMR" id="P0DKG0"/>
<dbReference type="GO" id="GO:0005938">
    <property type="term" value="C:cell cortex"/>
    <property type="evidence" value="ECO:0007669"/>
    <property type="project" value="TreeGrafter"/>
</dbReference>
<dbReference type="GO" id="GO:0005856">
    <property type="term" value="C:cytoskeleton"/>
    <property type="evidence" value="ECO:0007669"/>
    <property type="project" value="UniProtKB-SubCell"/>
</dbReference>
<dbReference type="GO" id="GO:0003785">
    <property type="term" value="F:actin monomer binding"/>
    <property type="evidence" value="ECO:0007669"/>
    <property type="project" value="TreeGrafter"/>
</dbReference>
<dbReference type="CDD" id="cd00148">
    <property type="entry name" value="PROF"/>
    <property type="match status" value="1"/>
</dbReference>
<dbReference type="FunFam" id="3.30.450.30:FF:000001">
    <property type="entry name" value="Profilin"/>
    <property type="match status" value="1"/>
</dbReference>
<dbReference type="Gene3D" id="3.30.450.30">
    <property type="entry name" value="Dynein light chain 2a, cytoplasmic"/>
    <property type="match status" value="1"/>
</dbReference>
<dbReference type="InterPro" id="IPR048278">
    <property type="entry name" value="PFN"/>
</dbReference>
<dbReference type="InterPro" id="IPR005455">
    <property type="entry name" value="PFN_euk"/>
</dbReference>
<dbReference type="InterPro" id="IPR036140">
    <property type="entry name" value="PFN_sf"/>
</dbReference>
<dbReference type="InterPro" id="IPR027310">
    <property type="entry name" value="Profilin_CS"/>
</dbReference>
<dbReference type="PANTHER" id="PTHR11604">
    <property type="entry name" value="PROFILIN"/>
    <property type="match status" value="1"/>
</dbReference>
<dbReference type="PANTHER" id="PTHR11604:SF31">
    <property type="entry name" value="PROFILIN"/>
    <property type="match status" value="1"/>
</dbReference>
<dbReference type="Pfam" id="PF00235">
    <property type="entry name" value="Profilin"/>
    <property type="match status" value="1"/>
</dbReference>
<dbReference type="PRINTS" id="PR00392">
    <property type="entry name" value="PROFILIN"/>
</dbReference>
<dbReference type="PRINTS" id="PR01640">
    <property type="entry name" value="PROFILINPLNT"/>
</dbReference>
<dbReference type="SMART" id="SM00392">
    <property type="entry name" value="PROF"/>
    <property type="match status" value="1"/>
</dbReference>
<dbReference type="SUPFAM" id="SSF55770">
    <property type="entry name" value="Profilin (actin-binding protein)"/>
    <property type="match status" value="1"/>
</dbReference>
<dbReference type="PROSITE" id="PS00414">
    <property type="entry name" value="PROFILIN"/>
    <property type="match status" value="1"/>
</dbReference>
<name>PROCB_OLEEU</name>
<evidence type="ECO:0000250" key="1"/>
<evidence type="ECO:0000305" key="2"/>
<evidence type="ECO:0000305" key="3">
    <source>
    </source>
</evidence>
<feature type="initiator methionine" description="Removed" evidence="1">
    <location>
        <position position="1"/>
    </location>
</feature>
<feature type="chain" id="PRO_0000425045" description="Profilin-3">
    <location>
        <begin position="2"/>
        <end position="131"/>
    </location>
</feature>
<feature type="short sequence motif" description="Involved in PIP2 interaction">
    <location>
        <begin position="81"/>
        <end position="97"/>
    </location>
</feature>
<feature type="modified residue" description="Phosphothreonine" evidence="1">
    <location>
        <position position="111"/>
    </location>
</feature>
<feature type="disulfide bond" evidence="3">
    <location>
        <begin position="13"/>
        <end position="115"/>
    </location>
</feature>
<accession>P0DKG0</accession>
<accession>A4GFB8</accession>